<sequence>MQWEVVIGLETHAQLQTQSKIFSGASTRFGAEPNTQACAVDLALPGVLPVLNREAVEHAIRFGLAVNAKISPASIFARKNYFYPDLPKGYQISQMEIPVVVGGHVEILVGDEVKVVELTRAHMEEDAGKSVHEEDFTGPYGEPSSGIDLNRAGTPLLEIVTEPVMRSAAEAVAYAKALHGLVVWLGVCDGNMQEGSFRCDANVSVRPKGQVEFGTRCEIKNLNSFRFLEEAIQYEVRRQIELIEDGGTVVQETRLYDPDRGETRSMRSKEDANDYRYFPDPDLLPVVIDDAWIEDVRSKMPALPAQLREQWQSEFGLSAYDAQLLTQDRDTAKVFEELLAIVGKPLAKAAANLITGEFASSLNRAGIAAANAPLKAEHLASLLTRVADGTISHKIAKDIFAILWEEAIAGKAISTVDQVIEAKGLKQISDSGAIEAIIDQVLAVNQKSVEEFRSGKEKAFNALVGQIMKASQGKANPGQVNELLRKKLG</sequence>
<proteinExistence type="inferred from homology"/>
<protein>
    <recommendedName>
        <fullName evidence="1">Aspartyl/glutamyl-tRNA(Asn/Gln) amidotransferase subunit B</fullName>
        <shortName evidence="1">Asp/Glu-ADT subunit B</shortName>
        <ecNumber evidence="1">6.3.5.-</ecNumber>
    </recommendedName>
</protein>
<reference key="1">
    <citation type="journal article" date="2012" name="Stand. Genomic Sci.">
        <title>Complete genome sequence of Polynucleobacter necessarius subsp. asymbioticus type strain (QLW-P1DMWA-1(T)).</title>
        <authorList>
            <person name="Meincke L."/>
            <person name="Copeland A."/>
            <person name="Lapidus A."/>
            <person name="Lucas S."/>
            <person name="Berry K.W."/>
            <person name="Del Rio T.G."/>
            <person name="Hammon N."/>
            <person name="Dalin E."/>
            <person name="Tice H."/>
            <person name="Pitluck S."/>
            <person name="Richardson P."/>
            <person name="Bruce D."/>
            <person name="Goodwin L."/>
            <person name="Han C."/>
            <person name="Tapia R."/>
            <person name="Detter J.C."/>
            <person name="Schmutz J."/>
            <person name="Brettin T."/>
            <person name="Larimer F."/>
            <person name="Land M."/>
            <person name="Hauser L."/>
            <person name="Kyrpides N.C."/>
            <person name="Ivanova N."/>
            <person name="Goker M."/>
            <person name="Woyke T."/>
            <person name="Wu Q.L."/>
            <person name="Pockl M."/>
            <person name="Hahn M.W."/>
            <person name="Klenk H.P."/>
        </authorList>
    </citation>
    <scope>NUCLEOTIDE SEQUENCE [LARGE SCALE GENOMIC DNA]</scope>
    <source>
        <strain>DSM 18221 / CIP 109841 / QLW-P1DMWA-1</strain>
    </source>
</reference>
<gene>
    <name evidence="1" type="primary">gatB</name>
    <name type="ordered locus">Pnuc_2018</name>
</gene>
<dbReference type="EC" id="6.3.5.-" evidence="1"/>
<dbReference type="EMBL" id="CP000655">
    <property type="protein sequence ID" value="ABP35229.1"/>
    <property type="molecule type" value="Genomic_DNA"/>
</dbReference>
<dbReference type="RefSeq" id="WP_011903852.1">
    <property type="nucleotide sequence ID" value="NC_009379.1"/>
</dbReference>
<dbReference type="SMR" id="A4T0G5"/>
<dbReference type="GeneID" id="31482408"/>
<dbReference type="KEGG" id="pnu:Pnuc_2018"/>
<dbReference type="eggNOG" id="COG0064">
    <property type="taxonomic scope" value="Bacteria"/>
</dbReference>
<dbReference type="HOGENOM" id="CLU_019240_0_0_4"/>
<dbReference type="Proteomes" id="UP000000231">
    <property type="component" value="Chromosome"/>
</dbReference>
<dbReference type="GO" id="GO:0050566">
    <property type="term" value="F:asparaginyl-tRNA synthase (glutamine-hydrolyzing) activity"/>
    <property type="evidence" value="ECO:0007669"/>
    <property type="project" value="RHEA"/>
</dbReference>
<dbReference type="GO" id="GO:0005524">
    <property type="term" value="F:ATP binding"/>
    <property type="evidence" value="ECO:0007669"/>
    <property type="project" value="UniProtKB-KW"/>
</dbReference>
<dbReference type="GO" id="GO:0050567">
    <property type="term" value="F:glutaminyl-tRNA synthase (glutamine-hydrolyzing) activity"/>
    <property type="evidence" value="ECO:0007669"/>
    <property type="project" value="UniProtKB-UniRule"/>
</dbReference>
<dbReference type="GO" id="GO:0070681">
    <property type="term" value="P:glutaminyl-tRNAGln biosynthesis via transamidation"/>
    <property type="evidence" value="ECO:0007669"/>
    <property type="project" value="TreeGrafter"/>
</dbReference>
<dbReference type="GO" id="GO:0006412">
    <property type="term" value="P:translation"/>
    <property type="evidence" value="ECO:0007669"/>
    <property type="project" value="UniProtKB-UniRule"/>
</dbReference>
<dbReference type="FunFam" id="1.10.10.410:FF:000001">
    <property type="entry name" value="Aspartyl/glutamyl-tRNA(Asn/Gln) amidotransferase subunit B"/>
    <property type="match status" value="1"/>
</dbReference>
<dbReference type="Gene3D" id="1.10.10.410">
    <property type="match status" value="1"/>
</dbReference>
<dbReference type="HAMAP" id="MF_00121">
    <property type="entry name" value="GatB"/>
    <property type="match status" value="1"/>
</dbReference>
<dbReference type="InterPro" id="IPR017959">
    <property type="entry name" value="Asn/Gln-tRNA_amidoTrfase_suB/E"/>
</dbReference>
<dbReference type="InterPro" id="IPR006075">
    <property type="entry name" value="Asn/Gln-tRNA_Trfase_suB/E_cat"/>
</dbReference>
<dbReference type="InterPro" id="IPR018027">
    <property type="entry name" value="Asn/Gln_amidotransferase"/>
</dbReference>
<dbReference type="InterPro" id="IPR003789">
    <property type="entry name" value="Asn/Gln_tRNA_amidoTrase-B-like"/>
</dbReference>
<dbReference type="InterPro" id="IPR004413">
    <property type="entry name" value="GatB"/>
</dbReference>
<dbReference type="InterPro" id="IPR023168">
    <property type="entry name" value="GatB_Yqey_C_2"/>
</dbReference>
<dbReference type="InterPro" id="IPR017958">
    <property type="entry name" value="Gln-tRNA_amidoTrfase_suB_CS"/>
</dbReference>
<dbReference type="InterPro" id="IPR014746">
    <property type="entry name" value="Gln_synth/guanido_kin_cat_dom"/>
</dbReference>
<dbReference type="NCBIfam" id="TIGR00133">
    <property type="entry name" value="gatB"/>
    <property type="match status" value="1"/>
</dbReference>
<dbReference type="NCBIfam" id="NF004012">
    <property type="entry name" value="PRK05477.1-2"/>
    <property type="match status" value="1"/>
</dbReference>
<dbReference type="NCBIfam" id="NF004014">
    <property type="entry name" value="PRK05477.1-4"/>
    <property type="match status" value="1"/>
</dbReference>
<dbReference type="NCBIfam" id="NF004015">
    <property type="entry name" value="PRK05477.1-5"/>
    <property type="match status" value="1"/>
</dbReference>
<dbReference type="PANTHER" id="PTHR11659">
    <property type="entry name" value="GLUTAMYL-TRNA GLN AMIDOTRANSFERASE SUBUNIT B MITOCHONDRIAL AND PROKARYOTIC PET112-RELATED"/>
    <property type="match status" value="1"/>
</dbReference>
<dbReference type="PANTHER" id="PTHR11659:SF0">
    <property type="entry name" value="GLUTAMYL-TRNA(GLN) AMIDOTRANSFERASE SUBUNIT B, MITOCHONDRIAL"/>
    <property type="match status" value="1"/>
</dbReference>
<dbReference type="Pfam" id="PF02934">
    <property type="entry name" value="GatB_N"/>
    <property type="match status" value="1"/>
</dbReference>
<dbReference type="Pfam" id="PF02637">
    <property type="entry name" value="GatB_Yqey"/>
    <property type="match status" value="1"/>
</dbReference>
<dbReference type="SMART" id="SM00845">
    <property type="entry name" value="GatB_Yqey"/>
    <property type="match status" value="1"/>
</dbReference>
<dbReference type="SUPFAM" id="SSF89095">
    <property type="entry name" value="GatB/YqeY motif"/>
    <property type="match status" value="1"/>
</dbReference>
<dbReference type="SUPFAM" id="SSF55931">
    <property type="entry name" value="Glutamine synthetase/guanido kinase"/>
    <property type="match status" value="1"/>
</dbReference>
<dbReference type="PROSITE" id="PS01234">
    <property type="entry name" value="GATB"/>
    <property type="match status" value="1"/>
</dbReference>
<keyword id="KW-0067">ATP-binding</keyword>
<keyword id="KW-0436">Ligase</keyword>
<keyword id="KW-0547">Nucleotide-binding</keyword>
<keyword id="KW-0648">Protein biosynthesis</keyword>
<keyword id="KW-1185">Reference proteome</keyword>
<comment type="function">
    <text evidence="1">Allows the formation of correctly charged Asn-tRNA(Asn) or Gln-tRNA(Gln) through the transamidation of misacylated Asp-tRNA(Asn) or Glu-tRNA(Gln) in organisms which lack either or both of asparaginyl-tRNA or glutaminyl-tRNA synthetases. The reaction takes place in the presence of glutamine and ATP through an activated phospho-Asp-tRNA(Asn) or phospho-Glu-tRNA(Gln).</text>
</comment>
<comment type="catalytic activity">
    <reaction evidence="1">
        <text>L-glutamyl-tRNA(Gln) + L-glutamine + ATP + H2O = L-glutaminyl-tRNA(Gln) + L-glutamate + ADP + phosphate + H(+)</text>
        <dbReference type="Rhea" id="RHEA:17521"/>
        <dbReference type="Rhea" id="RHEA-COMP:9681"/>
        <dbReference type="Rhea" id="RHEA-COMP:9684"/>
        <dbReference type="ChEBI" id="CHEBI:15377"/>
        <dbReference type="ChEBI" id="CHEBI:15378"/>
        <dbReference type="ChEBI" id="CHEBI:29985"/>
        <dbReference type="ChEBI" id="CHEBI:30616"/>
        <dbReference type="ChEBI" id="CHEBI:43474"/>
        <dbReference type="ChEBI" id="CHEBI:58359"/>
        <dbReference type="ChEBI" id="CHEBI:78520"/>
        <dbReference type="ChEBI" id="CHEBI:78521"/>
        <dbReference type="ChEBI" id="CHEBI:456216"/>
    </reaction>
</comment>
<comment type="catalytic activity">
    <reaction evidence="1">
        <text>L-aspartyl-tRNA(Asn) + L-glutamine + ATP + H2O = L-asparaginyl-tRNA(Asn) + L-glutamate + ADP + phosphate + 2 H(+)</text>
        <dbReference type="Rhea" id="RHEA:14513"/>
        <dbReference type="Rhea" id="RHEA-COMP:9674"/>
        <dbReference type="Rhea" id="RHEA-COMP:9677"/>
        <dbReference type="ChEBI" id="CHEBI:15377"/>
        <dbReference type="ChEBI" id="CHEBI:15378"/>
        <dbReference type="ChEBI" id="CHEBI:29985"/>
        <dbReference type="ChEBI" id="CHEBI:30616"/>
        <dbReference type="ChEBI" id="CHEBI:43474"/>
        <dbReference type="ChEBI" id="CHEBI:58359"/>
        <dbReference type="ChEBI" id="CHEBI:78515"/>
        <dbReference type="ChEBI" id="CHEBI:78516"/>
        <dbReference type="ChEBI" id="CHEBI:456216"/>
    </reaction>
</comment>
<comment type="subunit">
    <text evidence="1">Heterotrimer of A, B and C subunits.</text>
</comment>
<comment type="similarity">
    <text evidence="1">Belongs to the GatB/GatE family. GatB subfamily.</text>
</comment>
<name>GATB_POLAQ</name>
<accession>A4T0G5</accession>
<feature type="chain" id="PRO_1000076166" description="Aspartyl/glutamyl-tRNA(Asn/Gln) amidotransferase subunit B">
    <location>
        <begin position="1"/>
        <end position="489"/>
    </location>
</feature>
<evidence type="ECO:0000255" key="1">
    <source>
        <dbReference type="HAMAP-Rule" id="MF_00121"/>
    </source>
</evidence>
<organism>
    <name type="scientific">Polynucleobacter asymbioticus (strain DSM 18221 / CIP 109841 / QLW-P1DMWA-1)</name>
    <name type="common">Polynucleobacter necessarius subsp. asymbioticus</name>
    <dbReference type="NCBI Taxonomy" id="312153"/>
    <lineage>
        <taxon>Bacteria</taxon>
        <taxon>Pseudomonadati</taxon>
        <taxon>Pseudomonadota</taxon>
        <taxon>Betaproteobacteria</taxon>
        <taxon>Burkholderiales</taxon>
        <taxon>Burkholderiaceae</taxon>
        <taxon>Polynucleobacter</taxon>
    </lineage>
</organism>